<proteinExistence type="inferred from homology"/>
<reference key="1">
    <citation type="journal article" date="2006" name="J. Bacteriol.">
        <title>Genome sequence of Aeromonas hydrophila ATCC 7966T: jack of all trades.</title>
        <authorList>
            <person name="Seshadri R."/>
            <person name="Joseph S.W."/>
            <person name="Chopra A.K."/>
            <person name="Sha J."/>
            <person name="Shaw J."/>
            <person name="Graf J."/>
            <person name="Haft D.H."/>
            <person name="Wu M."/>
            <person name="Ren Q."/>
            <person name="Rosovitz M.J."/>
            <person name="Madupu R."/>
            <person name="Tallon L."/>
            <person name="Kim M."/>
            <person name="Jin S."/>
            <person name="Vuong H."/>
            <person name="Stine O.C."/>
            <person name="Ali A."/>
            <person name="Horneman A.J."/>
            <person name="Heidelberg J.F."/>
        </authorList>
    </citation>
    <scope>NUCLEOTIDE SEQUENCE [LARGE SCALE GENOMIC DNA]</scope>
    <source>
        <strain>ATCC 7966 / DSM 30187 / BCRC 13018 / CCUG 14551 / JCM 1027 / KCTC 2358 / NCIMB 9240 / NCTC 8049</strain>
    </source>
</reference>
<sequence>MAGHSKWANIKHRKAAQDAKRGKIFTKLIREITTSARLGDADPANNPRLRAAVAAALTGNMTRDTINRAIQRGAGGGDGEQLETIVYEGYGPAGSAVMVECLTDNRNRTVAEVRHAFSKCGGNLGTDGSVAYLFSKKGLLTFVGVDEDALMDAALEAGADDVVTEEDGSIEVYTTPNDFGTVLDGLEAAGFKPQSAEVTMIPSTEAELDAETAPKLMRLIDMLEDLDDVQEVYHNGSISDEVAATL</sequence>
<name>Y1522_AERHH</name>
<feature type="chain" id="PRO_1000045268" description="Probable transcriptional regulatory protein AHA_1522">
    <location>
        <begin position="1"/>
        <end position="246"/>
    </location>
</feature>
<protein>
    <recommendedName>
        <fullName evidence="1">Probable transcriptional regulatory protein AHA_1522</fullName>
    </recommendedName>
</protein>
<dbReference type="EMBL" id="CP000462">
    <property type="protein sequence ID" value="ABK36627.1"/>
    <property type="molecule type" value="Genomic_DNA"/>
</dbReference>
<dbReference type="RefSeq" id="WP_011705419.1">
    <property type="nucleotide sequence ID" value="NC_008570.1"/>
</dbReference>
<dbReference type="RefSeq" id="YP_856060.1">
    <property type="nucleotide sequence ID" value="NC_008570.1"/>
</dbReference>
<dbReference type="SMR" id="A0KIF9"/>
<dbReference type="STRING" id="380703.AHA_1522"/>
<dbReference type="EnsemblBacteria" id="ABK36627">
    <property type="protein sequence ID" value="ABK36627"/>
    <property type="gene ID" value="AHA_1522"/>
</dbReference>
<dbReference type="GeneID" id="4487212"/>
<dbReference type="KEGG" id="aha:AHA_1522"/>
<dbReference type="PATRIC" id="fig|380703.7.peg.1535"/>
<dbReference type="eggNOG" id="COG0217">
    <property type="taxonomic scope" value="Bacteria"/>
</dbReference>
<dbReference type="HOGENOM" id="CLU_062974_2_2_6"/>
<dbReference type="OrthoDB" id="9781053at2"/>
<dbReference type="Proteomes" id="UP000000756">
    <property type="component" value="Chromosome"/>
</dbReference>
<dbReference type="GO" id="GO:0005829">
    <property type="term" value="C:cytosol"/>
    <property type="evidence" value="ECO:0007669"/>
    <property type="project" value="TreeGrafter"/>
</dbReference>
<dbReference type="GO" id="GO:0003677">
    <property type="term" value="F:DNA binding"/>
    <property type="evidence" value="ECO:0007669"/>
    <property type="project" value="UniProtKB-UniRule"/>
</dbReference>
<dbReference type="GO" id="GO:0006355">
    <property type="term" value="P:regulation of DNA-templated transcription"/>
    <property type="evidence" value="ECO:0007669"/>
    <property type="project" value="UniProtKB-UniRule"/>
</dbReference>
<dbReference type="FunFam" id="1.10.10.200:FF:000001">
    <property type="entry name" value="Probable transcriptional regulatory protein YebC"/>
    <property type="match status" value="1"/>
</dbReference>
<dbReference type="FunFam" id="3.30.70.980:FF:000002">
    <property type="entry name" value="Probable transcriptional regulatory protein YebC"/>
    <property type="match status" value="1"/>
</dbReference>
<dbReference type="Gene3D" id="1.10.10.200">
    <property type="match status" value="1"/>
</dbReference>
<dbReference type="Gene3D" id="3.30.70.980">
    <property type="match status" value="2"/>
</dbReference>
<dbReference type="HAMAP" id="MF_00693">
    <property type="entry name" value="Transcrip_reg_TACO1"/>
    <property type="match status" value="1"/>
</dbReference>
<dbReference type="InterPro" id="IPR017856">
    <property type="entry name" value="Integrase-like_N"/>
</dbReference>
<dbReference type="InterPro" id="IPR048300">
    <property type="entry name" value="TACO1_YebC-like_2nd/3rd_dom"/>
</dbReference>
<dbReference type="InterPro" id="IPR049083">
    <property type="entry name" value="TACO1_YebC_N"/>
</dbReference>
<dbReference type="InterPro" id="IPR002876">
    <property type="entry name" value="Transcrip_reg_TACO1-like"/>
</dbReference>
<dbReference type="InterPro" id="IPR026564">
    <property type="entry name" value="Transcrip_reg_TACO1-like_dom3"/>
</dbReference>
<dbReference type="InterPro" id="IPR029072">
    <property type="entry name" value="YebC-like"/>
</dbReference>
<dbReference type="NCBIfam" id="NF001030">
    <property type="entry name" value="PRK00110.1"/>
    <property type="match status" value="1"/>
</dbReference>
<dbReference type="NCBIfam" id="NF009044">
    <property type="entry name" value="PRK12378.1"/>
    <property type="match status" value="1"/>
</dbReference>
<dbReference type="NCBIfam" id="TIGR01033">
    <property type="entry name" value="YebC/PmpR family DNA-binding transcriptional regulator"/>
    <property type="match status" value="1"/>
</dbReference>
<dbReference type="PANTHER" id="PTHR12532:SF6">
    <property type="entry name" value="TRANSCRIPTIONAL REGULATORY PROTEIN YEBC-RELATED"/>
    <property type="match status" value="1"/>
</dbReference>
<dbReference type="PANTHER" id="PTHR12532">
    <property type="entry name" value="TRANSLATIONAL ACTIVATOR OF CYTOCHROME C OXIDASE 1"/>
    <property type="match status" value="1"/>
</dbReference>
<dbReference type="Pfam" id="PF20772">
    <property type="entry name" value="TACO1_YebC_N"/>
    <property type="match status" value="1"/>
</dbReference>
<dbReference type="Pfam" id="PF01709">
    <property type="entry name" value="Transcrip_reg"/>
    <property type="match status" value="1"/>
</dbReference>
<dbReference type="SUPFAM" id="SSF75625">
    <property type="entry name" value="YebC-like"/>
    <property type="match status" value="1"/>
</dbReference>
<gene>
    <name type="ordered locus">AHA_1522</name>
</gene>
<comment type="subcellular location">
    <subcellularLocation>
        <location evidence="1">Cytoplasm</location>
    </subcellularLocation>
</comment>
<comment type="similarity">
    <text evidence="1">Belongs to the TACO1 family.</text>
</comment>
<organism>
    <name type="scientific">Aeromonas hydrophila subsp. hydrophila (strain ATCC 7966 / DSM 30187 / BCRC 13018 / CCUG 14551 / JCM 1027 / KCTC 2358 / NCIMB 9240 / NCTC 8049)</name>
    <dbReference type="NCBI Taxonomy" id="380703"/>
    <lineage>
        <taxon>Bacteria</taxon>
        <taxon>Pseudomonadati</taxon>
        <taxon>Pseudomonadota</taxon>
        <taxon>Gammaproteobacteria</taxon>
        <taxon>Aeromonadales</taxon>
        <taxon>Aeromonadaceae</taxon>
        <taxon>Aeromonas</taxon>
    </lineage>
</organism>
<keyword id="KW-0963">Cytoplasm</keyword>
<keyword id="KW-0238">DNA-binding</keyword>
<keyword id="KW-1185">Reference proteome</keyword>
<keyword id="KW-0804">Transcription</keyword>
<keyword id="KW-0805">Transcription regulation</keyword>
<evidence type="ECO:0000255" key="1">
    <source>
        <dbReference type="HAMAP-Rule" id="MF_00693"/>
    </source>
</evidence>
<accession>A0KIF9</accession>